<proteinExistence type="inferred from homology"/>
<keyword id="KW-0479">Metal-binding</keyword>
<keyword id="KW-1185">Reference proteome</keyword>
<keyword id="KW-0687">Ribonucleoprotein</keyword>
<keyword id="KW-0689">Ribosomal protein</keyword>
<keyword id="KW-0694">RNA-binding</keyword>
<keyword id="KW-0699">rRNA-binding</keyword>
<keyword id="KW-0862">Zinc</keyword>
<dbReference type="EMBL" id="AE017180">
    <property type="protein sequence ID" value="AAR36237.1"/>
    <property type="molecule type" value="Genomic_DNA"/>
</dbReference>
<dbReference type="RefSeq" id="NP_953887.1">
    <property type="nucleotide sequence ID" value="NC_002939.5"/>
</dbReference>
<dbReference type="RefSeq" id="WP_010943473.1">
    <property type="nucleotide sequence ID" value="NC_002939.5"/>
</dbReference>
<dbReference type="SMR" id="Q749A0"/>
<dbReference type="STRING" id="243231.GSU2844"/>
<dbReference type="EnsemblBacteria" id="AAR36237">
    <property type="protein sequence ID" value="AAR36237"/>
    <property type="gene ID" value="GSU2844"/>
</dbReference>
<dbReference type="KEGG" id="gsu:GSU2844"/>
<dbReference type="PATRIC" id="fig|243231.5.peg.2870"/>
<dbReference type="eggNOG" id="COG0199">
    <property type="taxonomic scope" value="Bacteria"/>
</dbReference>
<dbReference type="HOGENOM" id="CLU_139869_3_0_7"/>
<dbReference type="InParanoid" id="Q749A0"/>
<dbReference type="OrthoDB" id="9810484at2"/>
<dbReference type="Proteomes" id="UP000000577">
    <property type="component" value="Chromosome"/>
</dbReference>
<dbReference type="GO" id="GO:0005737">
    <property type="term" value="C:cytoplasm"/>
    <property type="evidence" value="ECO:0007669"/>
    <property type="project" value="UniProtKB-ARBA"/>
</dbReference>
<dbReference type="GO" id="GO:0015935">
    <property type="term" value="C:small ribosomal subunit"/>
    <property type="evidence" value="ECO:0000318"/>
    <property type="project" value="GO_Central"/>
</dbReference>
<dbReference type="GO" id="GO:0019843">
    <property type="term" value="F:rRNA binding"/>
    <property type="evidence" value="ECO:0007669"/>
    <property type="project" value="UniProtKB-UniRule"/>
</dbReference>
<dbReference type="GO" id="GO:0003735">
    <property type="term" value="F:structural constituent of ribosome"/>
    <property type="evidence" value="ECO:0000318"/>
    <property type="project" value="GO_Central"/>
</dbReference>
<dbReference type="GO" id="GO:0008270">
    <property type="term" value="F:zinc ion binding"/>
    <property type="evidence" value="ECO:0007669"/>
    <property type="project" value="UniProtKB-UniRule"/>
</dbReference>
<dbReference type="GO" id="GO:0006412">
    <property type="term" value="P:translation"/>
    <property type="evidence" value="ECO:0000318"/>
    <property type="project" value="GO_Central"/>
</dbReference>
<dbReference type="FunFam" id="4.10.830.10:FF:000001">
    <property type="entry name" value="30S ribosomal protein S14 type Z"/>
    <property type="match status" value="1"/>
</dbReference>
<dbReference type="Gene3D" id="4.10.830.10">
    <property type="entry name" value="30s Ribosomal Protein S14, Chain N"/>
    <property type="match status" value="1"/>
</dbReference>
<dbReference type="HAMAP" id="MF_01364_B">
    <property type="entry name" value="Ribosomal_uS14_2_B"/>
    <property type="match status" value="1"/>
</dbReference>
<dbReference type="InterPro" id="IPR001209">
    <property type="entry name" value="Ribosomal_uS14"/>
</dbReference>
<dbReference type="InterPro" id="IPR023053">
    <property type="entry name" value="Ribosomal_uS14_bact"/>
</dbReference>
<dbReference type="InterPro" id="IPR018271">
    <property type="entry name" value="Ribosomal_uS14_CS"/>
</dbReference>
<dbReference type="InterPro" id="IPR043140">
    <property type="entry name" value="Ribosomal_uS14_sf"/>
</dbReference>
<dbReference type="NCBIfam" id="NF005974">
    <property type="entry name" value="PRK08061.1"/>
    <property type="match status" value="1"/>
</dbReference>
<dbReference type="PANTHER" id="PTHR19836">
    <property type="entry name" value="30S RIBOSOMAL PROTEIN S14"/>
    <property type="match status" value="1"/>
</dbReference>
<dbReference type="PANTHER" id="PTHR19836:SF19">
    <property type="entry name" value="SMALL RIBOSOMAL SUBUNIT PROTEIN US14M"/>
    <property type="match status" value="1"/>
</dbReference>
<dbReference type="Pfam" id="PF00253">
    <property type="entry name" value="Ribosomal_S14"/>
    <property type="match status" value="1"/>
</dbReference>
<dbReference type="SUPFAM" id="SSF57716">
    <property type="entry name" value="Glucocorticoid receptor-like (DNA-binding domain)"/>
    <property type="match status" value="1"/>
</dbReference>
<dbReference type="PROSITE" id="PS00527">
    <property type="entry name" value="RIBOSOMAL_S14"/>
    <property type="match status" value="1"/>
</dbReference>
<accession>Q749A0</accession>
<protein>
    <recommendedName>
        <fullName evidence="1">Small ribosomal subunit protein uS14</fullName>
    </recommendedName>
    <alternativeName>
        <fullName evidence="2">30S ribosomal protein S14 type Z</fullName>
    </alternativeName>
</protein>
<comment type="function">
    <text evidence="1">Binds 16S rRNA, required for the assembly of 30S particles and may also be responsible for determining the conformation of the 16S rRNA at the A site.</text>
</comment>
<comment type="cofactor">
    <cofactor evidence="1">
        <name>Zn(2+)</name>
        <dbReference type="ChEBI" id="CHEBI:29105"/>
    </cofactor>
    <text evidence="1">Binds 1 zinc ion per subunit.</text>
</comment>
<comment type="subunit">
    <text evidence="1">Part of the 30S ribosomal subunit. Contacts proteins S3 and S10.</text>
</comment>
<comment type="similarity">
    <text evidence="1">Belongs to the universal ribosomal protein uS14 family. Zinc-binding uS14 subfamily.</text>
</comment>
<organism>
    <name type="scientific">Geobacter sulfurreducens (strain ATCC 51573 / DSM 12127 / PCA)</name>
    <dbReference type="NCBI Taxonomy" id="243231"/>
    <lineage>
        <taxon>Bacteria</taxon>
        <taxon>Pseudomonadati</taxon>
        <taxon>Thermodesulfobacteriota</taxon>
        <taxon>Desulfuromonadia</taxon>
        <taxon>Geobacterales</taxon>
        <taxon>Geobacteraceae</taxon>
        <taxon>Geobacter</taxon>
    </lineage>
</organism>
<evidence type="ECO:0000255" key="1">
    <source>
        <dbReference type="HAMAP-Rule" id="MF_01364"/>
    </source>
</evidence>
<evidence type="ECO:0000305" key="2"/>
<gene>
    <name evidence="1" type="primary">rpsZ</name>
    <name evidence="1" type="synonym">rpsN</name>
    <name type="ordered locus">GSU2844</name>
</gene>
<reference key="1">
    <citation type="journal article" date="2003" name="Science">
        <title>Genome of Geobacter sulfurreducens: metal reduction in subsurface environments.</title>
        <authorList>
            <person name="Methe B.A."/>
            <person name="Nelson K.E."/>
            <person name="Eisen J.A."/>
            <person name="Paulsen I.T."/>
            <person name="Nelson W.C."/>
            <person name="Heidelberg J.F."/>
            <person name="Wu D."/>
            <person name="Wu M."/>
            <person name="Ward N.L."/>
            <person name="Beanan M.J."/>
            <person name="Dodson R.J."/>
            <person name="Madupu R."/>
            <person name="Brinkac L.M."/>
            <person name="Daugherty S.C."/>
            <person name="DeBoy R.T."/>
            <person name="Durkin A.S."/>
            <person name="Gwinn M.L."/>
            <person name="Kolonay J.F."/>
            <person name="Sullivan S.A."/>
            <person name="Haft D.H."/>
            <person name="Selengut J."/>
            <person name="Davidsen T.M."/>
            <person name="Zafar N."/>
            <person name="White O."/>
            <person name="Tran B."/>
            <person name="Romero C."/>
            <person name="Forberger H.A."/>
            <person name="Weidman J.F."/>
            <person name="Khouri H.M."/>
            <person name="Feldblyum T.V."/>
            <person name="Utterback T.R."/>
            <person name="Van Aken S.E."/>
            <person name="Lovley D.R."/>
            <person name="Fraser C.M."/>
        </authorList>
    </citation>
    <scope>NUCLEOTIDE SEQUENCE [LARGE SCALE GENOMIC DNA]</scope>
    <source>
        <strain>ATCC 51573 / DSM 12127 / PCA</strain>
    </source>
</reference>
<sequence length="61" mass="7071">MAKTSMIIKAQRGSKFKVREYNRCPLCGRPRAYYRKFDMCRICLRKLASAGQIPGVIKSSW</sequence>
<feature type="chain" id="PRO_0000269104" description="Small ribosomal subunit protein uS14">
    <location>
        <begin position="1"/>
        <end position="61"/>
    </location>
</feature>
<feature type="binding site" evidence="1">
    <location>
        <position position="24"/>
    </location>
    <ligand>
        <name>Zn(2+)</name>
        <dbReference type="ChEBI" id="CHEBI:29105"/>
    </ligand>
</feature>
<feature type="binding site" evidence="1">
    <location>
        <position position="27"/>
    </location>
    <ligand>
        <name>Zn(2+)</name>
        <dbReference type="ChEBI" id="CHEBI:29105"/>
    </ligand>
</feature>
<feature type="binding site" evidence="1">
    <location>
        <position position="40"/>
    </location>
    <ligand>
        <name>Zn(2+)</name>
        <dbReference type="ChEBI" id="CHEBI:29105"/>
    </ligand>
</feature>
<feature type="binding site" evidence="1">
    <location>
        <position position="43"/>
    </location>
    <ligand>
        <name>Zn(2+)</name>
        <dbReference type="ChEBI" id="CHEBI:29105"/>
    </ligand>
</feature>
<name>RS14Z_GEOSL</name>